<dbReference type="EC" id="1.2.7.12" evidence="1"/>
<dbReference type="EMBL" id="X93084">
    <property type="protein sequence ID" value="CAA63631.1"/>
    <property type="molecule type" value="Genomic_DNA"/>
</dbReference>
<dbReference type="EMBL" id="CP000099">
    <property type="protein sequence ID" value="AAZ70253.1"/>
    <property type="molecule type" value="Genomic_DNA"/>
</dbReference>
<dbReference type="PIR" id="S62199">
    <property type="entry name" value="S62199"/>
</dbReference>
<dbReference type="SMR" id="Q48943"/>
<dbReference type="STRING" id="269797.Mbar_A1290"/>
<dbReference type="TCDB" id="3.D.8.1.2">
    <property type="family name" value="the na(+)- or h(+)-pumping formyl methanofuran dehydrogenase (fmf-dh) family"/>
</dbReference>
<dbReference type="PaxDb" id="269797-Mbar_A1290"/>
<dbReference type="KEGG" id="mba:Mbar_A1290"/>
<dbReference type="eggNOG" id="arCOG00097">
    <property type="taxonomic scope" value="Archaea"/>
</dbReference>
<dbReference type="HOGENOM" id="CLU_072248_0_0_2"/>
<dbReference type="UniPathway" id="UPA00640">
    <property type="reaction ID" value="UER00692"/>
</dbReference>
<dbReference type="GO" id="GO:0018493">
    <property type="term" value="F:formylmethanofuran dehydrogenase activity"/>
    <property type="evidence" value="ECO:0007669"/>
    <property type="project" value="UniProtKB-EC"/>
</dbReference>
<dbReference type="GO" id="GO:0046914">
    <property type="term" value="F:transition metal ion binding"/>
    <property type="evidence" value="ECO:0007669"/>
    <property type="project" value="InterPro"/>
</dbReference>
<dbReference type="GO" id="GO:0019386">
    <property type="term" value="P:methanogenesis, from carbon dioxide"/>
    <property type="evidence" value="ECO:0007669"/>
    <property type="project" value="UniProtKB-UniPathway"/>
</dbReference>
<dbReference type="CDD" id="cd00980">
    <property type="entry name" value="FwdC/FmdC"/>
    <property type="match status" value="1"/>
</dbReference>
<dbReference type="Gene3D" id="2.160.20.60">
    <property type="entry name" value="Glutamate synthase, alpha subunit, C-terminal domain"/>
    <property type="match status" value="2"/>
</dbReference>
<dbReference type="InterPro" id="IPR017550">
    <property type="entry name" value="Formylmethanofuran_DH_suC"/>
</dbReference>
<dbReference type="InterPro" id="IPR002489">
    <property type="entry name" value="Glu_synth_asu_C"/>
</dbReference>
<dbReference type="InterPro" id="IPR036485">
    <property type="entry name" value="Glu_synth_asu_C_sf"/>
</dbReference>
<dbReference type="NCBIfam" id="TIGR03122">
    <property type="entry name" value="one_C_dehyd_C"/>
    <property type="match status" value="1"/>
</dbReference>
<dbReference type="PANTHER" id="PTHR39673">
    <property type="entry name" value="TUNGSTEN FORMYLMETHANOFURAN DEHYDROGENASE, SUBUNIT C (FWDC)"/>
    <property type="match status" value="1"/>
</dbReference>
<dbReference type="PANTHER" id="PTHR39673:SF5">
    <property type="entry name" value="TUNGSTEN-CONTAINING FORMYLMETHANOFURAN DEHYDROGENASE 2 SUBUNIT C"/>
    <property type="match status" value="1"/>
</dbReference>
<dbReference type="Pfam" id="PF01493">
    <property type="entry name" value="GXGXG"/>
    <property type="match status" value="1"/>
</dbReference>
<dbReference type="SUPFAM" id="SSF69336">
    <property type="entry name" value="Alpha subunit of glutamate synthase, C-terminal domain"/>
    <property type="match status" value="1"/>
</dbReference>
<name>FMDC_METBF</name>
<protein>
    <recommendedName>
        <fullName>Molybdenum-containing formylmethanofuran dehydrogenase 1 subunit C</fullName>
        <ecNumber evidence="1">1.2.7.12</ecNumber>
    </recommendedName>
    <alternativeName>
        <fullName>Molybdenum-containing formylmethanofuran dehydrogenase I subunit C</fullName>
    </alternativeName>
</protein>
<sequence>MTEGVLINENEVESKLEAVIKPGSFTGENAGEMAEVILIPKKAIDIKLEADVITPDSFAGKSAEEIGKLSVWQGPKTYPLSEFFEVTGNGGSSAAETLIRIKGDAMRIKRIGESMSAGKIEIEGSAGMHVGTGMKGGELVVYGDADSWAGMEMTGGLLHIKGNAGDHVGCAYRGKWHGMKGGRIVIEGSARHQLGGGMDGGEILVEGDVKSFCGIRQNGGLIFVKGSALRGVGAEMAGGTIVIGGKIERFSPGFEFVSMENSITSGEVELIGEFKKFTGDYAISKRAKGALYVVADTNPEL</sequence>
<gene>
    <name type="primary">fmdC</name>
    <name type="ordered locus">Mbar_A1290</name>
</gene>
<reference key="1">
    <citation type="journal article" date="1996" name="Eur. J. Biochem.">
        <title>A polyferredoxin with eight [4Fe-4S] clusters as a subunit of molybdenum formylmethanofuran dehydrogenase from Methanosarcina barkeri.</title>
        <authorList>
            <person name="Vorholt J.A."/>
            <person name="Vaupel M."/>
            <person name="Thauer R.K."/>
        </authorList>
    </citation>
    <scope>NUCLEOTIDE SEQUENCE [GENOMIC DNA]</scope>
    <scope>PROTEIN SEQUENCE OF 1-23</scope>
</reference>
<reference key="2">
    <citation type="journal article" date="2006" name="J. Bacteriol.">
        <title>The Methanosarcina barkeri genome: comparative analysis with Methanosarcina acetivorans and Methanosarcina mazei reveals extensive rearrangement within methanosarcinal genomes.</title>
        <authorList>
            <person name="Maeder D.L."/>
            <person name="Anderson I."/>
            <person name="Brettin T.S."/>
            <person name="Bruce D.C."/>
            <person name="Gilna P."/>
            <person name="Han C.S."/>
            <person name="Lapidus A."/>
            <person name="Metcalf W.W."/>
            <person name="Saunders E."/>
            <person name="Tapia R."/>
            <person name="Sowers K.R."/>
        </authorList>
    </citation>
    <scope>NUCLEOTIDE SEQUENCE [LARGE SCALE GENOMIC DNA]</scope>
    <source>
        <strain>Fusaro / DSM 804</strain>
    </source>
</reference>
<reference key="3">
    <citation type="journal article" date="1994" name="Eur. J. Biochem.">
        <title>Formylmethanofuran dehydrogenases from methanogenic Archaea. Substrate specificity, EPR properties and reversible inactivation by cyanide of the molybdenum or tungsten iron-sulfur proteins.</title>
        <authorList>
            <person name="Bertram P.A."/>
            <person name="Karrach M."/>
            <person name="Schmitz R.A."/>
            <person name="Boecher R."/>
            <person name="Albracht S.P.J."/>
            <person name="Thauer R.K."/>
        </authorList>
    </citation>
    <scope>FUNCTION</scope>
    <scope>CATALYTIC ACTIVITY</scope>
    <scope>SUBSTRATE SPECIFICITY</scope>
</reference>
<proteinExistence type="evidence at protein level"/>
<comment type="function">
    <text evidence="1">Catalyzes the reversible oxidation of CO(2) and methanofuran (MFR) to N-formylmethanofuran (CHO-MFR). Can use N-furfurylformamide, formamide, N-methylformamide, and formate as substrates. This enzyme is oxygen-labile.</text>
</comment>
<comment type="catalytic activity">
    <reaction evidence="1">
        <text>N-formylmethanofuran + 2 oxidized [2Fe-2S]-[ferredoxin] + H2O = methanofuran + 2 reduced [2Fe-2S]-[ferredoxin] + CO2 + H(+)</text>
        <dbReference type="Rhea" id="RHEA:19841"/>
        <dbReference type="Rhea" id="RHEA-COMP:10000"/>
        <dbReference type="Rhea" id="RHEA-COMP:10001"/>
        <dbReference type="ChEBI" id="CHEBI:15377"/>
        <dbReference type="ChEBI" id="CHEBI:15378"/>
        <dbReference type="ChEBI" id="CHEBI:16526"/>
        <dbReference type="ChEBI" id="CHEBI:33737"/>
        <dbReference type="ChEBI" id="CHEBI:33738"/>
        <dbReference type="ChEBI" id="CHEBI:57727"/>
        <dbReference type="ChEBI" id="CHEBI:58151"/>
        <dbReference type="EC" id="1.2.7.12"/>
    </reaction>
</comment>
<comment type="activity regulation">
    <text>Inactivated by cyanide.</text>
</comment>
<comment type="pathway">
    <text>One-carbon metabolism; methanogenesis from CO(2); 5,10-methenyl-5,6,7,8-tetrahydromethanopterin from CO(2): step 1/3.</text>
</comment>
<comment type="subunit">
    <text>This enzyme is composed of six subunits; FmdA (65 kDa), FmdB (50 kDa), FmdC (34 kDa), FmdD (17 kDa), FmdE (23 kDa) and FmdF (37 kDa).</text>
</comment>
<comment type="induction">
    <text>By growth on molybdenum, under anaerobic conditions.</text>
</comment>
<comment type="similarity">
    <text evidence="2">Belongs to the FwdC/FmdC family.</text>
</comment>
<evidence type="ECO:0000269" key="1">
    <source>
    </source>
</evidence>
<evidence type="ECO:0000305" key="2"/>
<feature type="chain" id="PRO_0000144190" description="Molybdenum-containing formylmethanofuran dehydrogenase 1 subunit C">
    <location>
        <begin position="1"/>
        <end position="301"/>
    </location>
</feature>
<feature type="repeat" description="1">
    <location>
        <begin position="112"/>
        <end position="124"/>
    </location>
</feature>
<feature type="repeat" description="2">
    <location>
        <begin position="131"/>
        <end position="143"/>
    </location>
</feature>
<feature type="repeat" description="3">
    <location>
        <begin position="150"/>
        <end position="162"/>
    </location>
</feature>
<feature type="repeat" description="4">
    <location>
        <begin position="176"/>
        <end position="188"/>
    </location>
</feature>
<feature type="repeat" description="5">
    <location>
        <begin position="195"/>
        <end position="207"/>
    </location>
</feature>
<feature type="repeat" description="6">
    <location>
        <begin position="214"/>
        <end position="226"/>
    </location>
</feature>
<feature type="repeat" description="7">
    <location>
        <begin position="233"/>
        <end position="245"/>
    </location>
</feature>
<feature type="region of interest" description="7 X 13 AA repeats of [GW]-X-X-[MQ]-X-X-G-X-[IL]-X-[IV]-X-G">
    <location>
        <begin position="112"/>
        <end position="245"/>
    </location>
</feature>
<feature type="sequence conflict" description="In Ref. 1; AA sequence." evidence="2" ref="1">
    <location>
        <position position="2"/>
    </location>
</feature>
<keyword id="KW-0903">Direct protein sequencing</keyword>
<keyword id="KW-0484">Methanogenesis</keyword>
<keyword id="KW-0560">Oxidoreductase</keyword>
<keyword id="KW-0677">Repeat</keyword>
<organism>
    <name type="scientific">Methanosarcina barkeri (strain Fusaro / DSM 804)</name>
    <dbReference type="NCBI Taxonomy" id="269797"/>
    <lineage>
        <taxon>Archaea</taxon>
        <taxon>Methanobacteriati</taxon>
        <taxon>Methanobacteriota</taxon>
        <taxon>Stenosarchaea group</taxon>
        <taxon>Methanomicrobia</taxon>
        <taxon>Methanosarcinales</taxon>
        <taxon>Methanosarcinaceae</taxon>
        <taxon>Methanosarcina</taxon>
    </lineage>
</organism>
<accession>Q48943</accession>
<accession>Q46CY9</accession>